<feature type="chain" id="PRO_1000046111" description="Ribosomal protein L11 methyltransferase">
    <location>
        <begin position="1"/>
        <end position="317"/>
    </location>
</feature>
<feature type="binding site" evidence="1">
    <location>
        <position position="158"/>
    </location>
    <ligand>
        <name>S-adenosyl-L-methionine</name>
        <dbReference type="ChEBI" id="CHEBI:59789"/>
    </ligand>
</feature>
<feature type="binding site" evidence="1">
    <location>
        <position position="179"/>
    </location>
    <ligand>
        <name>S-adenosyl-L-methionine</name>
        <dbReference type="ChEBI" id="CHEBI:59789"/>
    </ligand>
</feature>
<feature type="binding site" evidence="1">
    <location>
        <position position="201"/>
    </location>
    <ligand>
        <name>S-adenosyl-L-methionine</name>
        <dbReference type="ChEBI" id="CHEBI:59789"/>
    </ligand>
</feature>
<feature type="binding site" evidence="1">
    <location>
        <position position="244"/>
    </location>
    <ligand>
        <name>S-adenosyl-L-methionine</name>
        <dbReference type="ChEBI" id="CHEBI:59789"/>
    </ligand>
</feature>
<name>PRMA_STRT1</name>
<accession>Q5M1S5</accession>
<proteinExistence type="inferred from homology"/>
<reference key="1">
    <citation type="journal article" date="2004" name="Nat. Biotechnol.">
        <title>Complete sequence and comparative genome analysis of the dairy bacterium Streptococcus thermophilus.</title>
        <authorList>
            <person name="Bolotin A."/>
            <person name="Quinquis B."/>
            <person name="Renault P."/>
            <person name="Sorokin A."/>
            <person name="Ehrlich S.D."/>
            <person name="Kulakauskas S."/>
            <person name="Lapidus A."/>
            <person name="Goltsman E."/>
            <person name="Mazur M."/>
            <person name="Pusch G.D."/>
            <person name="Fonstein M."/>
            <person name="Overbeek R."/>
            <person name="Kyprides N."/>
            <person name="Purnelle B."/>
            <person name="Prozzi D."/>
            <person name="Ngui K."/>
            <person name="Masuy D."/>
            <person name="Hancy F."/>
            <person name="Burteau S."/>
            <person name="Boutry M."/>
            <person name="Delcour J."/>
            <person name="Goffeau A."/>
            <person name="Hols P."/>
        </authorList>
    </citation>
    <scope>NUCLEOTIDE SEQUENCE [LARGE SCALE GENOMIC DNA]</scope>
    <source>
        <strain>CNRZ 1066</strain>
    </source>
</reference>
<sequence length="317" mass="35111">MNKWQELTIEVNREVEEAASNILIESGSQGVTIDDSADYLENADRFGELYPEVEQVETVKITAYYPESADIEAITKQVNDRLDELTDFGLETGDIHLVTQELVEEDWAENWKKYYEPARITHDLTIVPSWTDYEASVGEKIIKLDPGMAFGTGTHPTTKMSLFALEQVLRGGETVIDVGTGSGVLSIASSLLGAKEIYAYDLDDVAVRVAQENIDMNPGMENIHVATGDLLKGVTQEADVIVANILADILIHLMEDAYRLVKDEGYLIMSGIISEKWDMVRELAEKAGFLLETHMVQGEWNACVFKKTDDISGVIGG</sequence>
<keyword id="KW-0963">Cytoplasm</keyword>
<keyword id="KW-0489">Methyltransferase</keyword>
<keyword id="KW-0949">S-adenosyl-L-methionine</keyword>
<keyword id="KW-0808">Transferase</keyword>
<evidence type="ECO:0000255" key="1">
    <source>
        <dbReference type="HAMAP-Rule" id="MF_00735"/>
    </source>
</evidence>
<gene>
    <name evidence="1" type="primary">prmA</name>
    <name type="ordered locus">str0137</name>
</gene>
<comment type="function">
    <text evidence="1">Methylates ribosomal protein L11.</text>
</comment>
<comment type="catalytic activity">
    <reaction evidence="1">
        <text>L-lysyl-[protein] + 3 S-adenosyl-L-methionine = N(6),N(6),N(6)-trimethyl-L-lysyl-[protein] + 3 S-adenosyl-L-homocysteine + 3 H(+)</text>
        <dbReference type="Rhea" id="RHEA:54192"/>
        <dbReference type="Rhea" id="RHEA-COMP:9752"/>
        <dbReference type="Rhea" id="RHEA-COMP:13826"/>
        <dbReference type="ChEBI" id="CHEBI:15378"/>
        <dbReference type="ChEBI" id="CHEBI:29969"/>
        <dbReference type="ChEBI" id="CHEBI:57856"/>
        <dbReference type="ChEBI" id="CHEBI:59789"/>
        <dbReference type="ChEBI" id="CHEBI:61961"/>
    </reaction>
</comment>
<comment type="subcellular location">
    <subcellularLocation>
        <location evidence="1">Cytoplasm</location>
    </subcellularLocation>
</comment>
<comment type="similarity">
    <text evidence="1">Belongs to the methyltransferase superfamily. PrmA family.</text>
</comment>
<dbReference type="EC" id="2.1.1.-" evidence="1"/>
<dbReference type="EMBL" id="CP000024">
    <property type="protein sequence ID" value="AAV61752.1"/>
    <property type="molecule type" value="Genomic_DNA"/>
</dbReference>
<dbReference type="RefSeq" id="WP_011225343.1">
    <property type="nucleotide sequence ID" value="NC_006449.1"/>
</dbReference>
<dbReference type="SMR" id="Q5M1S5"/>
<dbReference type="GeneID" id="66898083"/>
<dbReference type="KEGG" id="stc:str0137"/>
<dbReference type="HOGENOM" id="CLU_049382_0_1_9"/>
<dbReference type="GO" id="GO:0005737">
    <property type="term" value="C:cytoplasm"/>
    <property type="evidence" value="ECO:0007669"/>
    <property type="project" value="UniProtKB-SubCell"/>
</dbReference>
<dbReference type="GO" id="GO:0016279">
    <property type="term" value="F:protein-lysine N-methyltransferase activity"/>
    <property type="evidence" value="ECO:0007669"/>
    <property type="project" value="RHEA"/>
</dbReference>
<dbReference type="GO" id="GO:0032259">
    <property type="term" value="P:methylation"/>
    <property type="evidence" value="ECO:0007669"/>
    <property type="project" value="UniProtKB-KW"/>
</dbReference>
<dbReference type="CDD" id="cd02440">
    <property type="entry name" value="AdoMet_MTases"/>
    <property type="match status" value="1"/>
</dbReference>
<dbReference type="Gene3D" id="3.40.50.150">
    <property type="entry name" value="Vaccinia Virus protein VP39"/>
    <property type="match status" value="1"/>
</dbReference>
<dbReference type="HAMAP" id="MF_00735">
    <property type="entry name" value="Methyltr_PrmA"/>
    <property type="match status" value="1"/>
</dbReference>
<dbReference type="InterPro" id="IPR050078">
    <property type="entry name" value="Ribosomal_L11_MeTrfase_PrmA"/>
</dbReference>
<dbReference type="InterPro" id="IPR004498">
    <property type="entry name" value="Ribosomal_PrmA_MeTrfase"/>
</dbReference>
<dbReference type="InterPro" id="IPR029063">
    <property type="entry name" value="SAM-dependent_MTases_sf"/>
</dbReference>
<dbReference type="NCBIfam" id="TIGR00406">
    <property type="entry name" value="prmA"/>
    <property type="match status" value="1"/>
</dbReference>
<dbReference type="PANTHER" id="PTHR43648">
    <property type="entry name" value="ELECTRON TRANSFER FLAVOPROTEIN BETA SUBUNIT LYSINE METHYLTRANSFERASE"/>
    <property type="match status" value="1"/>
</dbReference>
<dbReference type="PANTHER" id="PTHR43648:SF1">
    <property type="entry name" value="ELECTRON TRANSFER FLAVOPROTEIN BETA SUBUNIT LYSINE METHYLTRANSFERASE"/>
    <property type="match status" value="1"/>
</dbReference>
<dbReference type="Pfam" id="PF06325">
    <property type="entry name" value="PrmA"/>
    <property type="match status" value="1"/>
</dbReference>
<dbReference type="PIRSF" id="PIRSF000401">
    <property type="entry name" value="RPL11_MTase"/>
    <property type="match status" value="1"/>
</dbReference>
<dbReference type="SUPFAM" id="SSF53335">
    <property type="entry name" value="S-adenosyl-L-methionine-dependent methyltransferases"/>
    <property type="match status" value="1"/>
</dbReference>
<protein>
    <recommendedName>
        <fullName evidence="1">Ribosomal protein L11 methyltransferase</fullName>
        <shortName evidence="1">L11 Mtase</shortName>
        <ecNumber evidence="1">2.1.1.-</ecNumber>
    </recommendedName>
</protein>
<organism>
    <name type="scientific">Streptococcus thermophilus (strain CNRZ 1066)</name>
    <dbReference type="NCBI Taxonomy" id="299768"/>
    <lineage>
        <taxon>Bacteria</taxon>
        <taxon>Bacillati</taxon>
        <taxon>Bacillota</taxon>
        <taxon>Bacilli</taxon>
        <taxon>Lactobacillales</taxon>
        <taxon>Streptococcaceae</taxon>
        <taxon>Streptococcus</taxon>
    </lineage>
</organism>